<protein>
    <recommendedName>
        <fullName>Uncharacterized 13.8 kDa protein in motB-dexA intergenic region</fullName>
    </recommendedName>
</protein>
<dbReference type="EMBL" id="U76613">
    <property type="protein sequence ID" value="AAB26983.1"/>
    <property type="molecule type" value="Genomic_DNA"/>
</dbReference>
<dbReference type="EMBL" id="AF158101">
    <property type="protein sequence ID" value="AAD42610.1"/>
    <property type="molecule type" value="Genomic_DNA"/>
</dbReference>
<dbReference type="PIR" id="JZ0004">
    <property type="entry name" value="JZ0004"/>
</dbReference>
<dbReference type="RefSeq" id="NP_049627.1">
    <property type="nucleotide sequence ID" value="NC_000866.4"/>
</dbReference>
<dbReference type="GeneID" id="1258611"/>
<dbReference type="KEGG" id="vg:1258611"/>
<dbReference type="OrthoDB" id="21520at10239"/>
<dbReference type="Proteomes" id="UP000009087">
    <property type="component" value="Segment"/>
</dbReference>
<reference key="1">
    <citation type="submission" date="1996-11" db="EMBL/GenBank/DDBJ databases">
        <title>Two new orfs between dexA and motB in bacteriophage T4.</title>
        <authorList>
            <person name="Uzan M."/>
            <person name="Spicer E."/>
            <person name="White T."/>
            <person name="Kutter E.M."/>
        </authorList>
    </citation>
    <scope>NUCLEOTIDE SEQUENCE [GENOMIC DNA]</scope>
</reference>
<reference key="2">
    <citation type="journal article" date="2003" name="Microbiol. Mol. Biol. Rev.">
        <title>Bacteriophage T4 genome.</title>
        <authorList>
            <person name="Miller E.S."/>
            <person name="Kutter E."/>
            <person name="Mosig G."/>
            <person name="Arisaka F."/>
            <person name="Kunisawa T."/>
            <person name="Ruger W."/>
        </authorList>
    </citation>
    <scope>NUCLEOTIDE SEQUENCE [LARGE SCALE GENOMIC DNA]</scope>
</reference>
<organismHost>
    <name type="scientific">Escherichia coli</name>
    <dbReference type="NCBI Taxonomy" id="562"/>
</organismHost>
<gene>
    <name type="primary">y00E</name>
    <name type="synonym">motB.1</name>
</gene>
<organism>
    <name type="scientific">Enterobacteria phage T4</name>
    <name type="common">Bacteriophage T4</name>
    <dbReference type="NCBI Taxonomy" id="10665"/>
    <lineage>
        <taxon>Viruses</taxon>
        <taxon>Duplodnaviria</taxon>
        <taxon>Heunggongvirae</taxon>
        <taxon>Uroviricota</taxon>
        <taxon>Caudoviricetes</taxon>
        <taxon>Straboviridae</taxon>
        <taxon>Tevenvirinae</taxon>
        <taxon>Tequatrovirus</taxon>
    </lineage>
</organism>
<name>Y00E_BPT4</name>
<accession>P39415</accession>
<feature type="chain" id="PRO_0000165080" description="Uncharacterized 13.8 kDa protein in motB-dexA intergenic region">
    <location>
        <begin position="1"/>
        <end position="119"/>
    </location>
</feature>
<sequence length="119" mass="13804">MIKINTAYQMKKPSEIDFQTMSNTTDSKFWELLGTTGGYPFTVISVNSGILIGTVYMEIRNYYGRVSSFIIYEEDFNLLTEIEKPEDPTDLLCKAVYIRRPFANPIGGWVTDQWIGRWR</sequence>
<keyword id="KW-1185">Reference proteome</keyword>
<proteinExistence type="predicted"/>